<reference key="1">
    <citation type="journal article" date="2002" name="Proc. Natl. Acad. Sci. U.S.A.">
        <title>Genome sequence of the hyperthermophilic crenarchaeon Pyrobaculum aerophilum.</title>
        <authorList>
            <person name="Fitz-Gibbon S.T."/>
            <person name="Ladner H."/>
            <person name="Kim U.-J."/>
            <person name="Stetter K.O."/>
            <person name="Simon M.I."/>
            <person name="Miller J.H."/>
        </authorList>
    </citation>
    <scope>NUCLEOTIDE SEQUENCE [LARGE SCALE GENOMIC DNA]</scope>
    <source>
        <strain>ATCC 51768 / DSM 7523 / JCM 9630 / CIP 104966 / NBRC 100827 / IM2</strain>
    </source>
</reference>
<keyword id="KW-0067">ATP-binding</keyword>
<keyword id="KW-0235">DNA replication</keyword>
<keyword id="KW-0547">Nucleotide-binding</keyword>
<keyword id="KW-1185">Reference proteome</keyword>
<gene>
    <name evidence="1" type="primary">rfcL</name>
    <name type="ordered locus">PAE0735</name>
</gene>
<comment type="function">
    <text evidence="1">Part of the RFC clamp loader complex which loads the PCNA sliding clamp onto DNA.</text>
</comment>
<comment type="subunit">
    <text evidence="1">Heteromultimer composed of small subunits (RfcS) and large subunits (RfcL).</text>
</comment>
<comment type="similarity">
    <text evidence="1">Belongs to the activator 1 small subunits family. RfcL subfamily.</text>
</comment>
<feature type="chain" id="PRO_0000135961" description="Replication factor C large subunit">
    <location>
        <begin position="1"/>
        <end position="422"/>
    </location>
</feature>
<feature type="binding site" evidence="1">
    <location>
        <begin position="63"/>
        <end position="70"/>
    </location>
    <ligand>
        <name>ATP</name>
        <dbReference type="ChEBI" id="CHEBI:30616"/>
    </ligand>
</feature>
<dbReference type="EMBL" id="AE009441">
    <property type="protein sequence ID" value="AAL62990.1"/>
    <property type="molecule type" value="Genomic_DNA"/>
</dbReference>
<dbReference type="RefSeq" id="WP_011007462.1">
    <property type="nucleotide sequence ID" value="NC_003364.1"/>
</dbReference>
<dbReference type="SMR" id="Q8ZYK3"/>
<dbReference type="STRING" id="178306.PAE0735"/>
<dbReference type="EnsemblBacteria" id="AAL62990">
    <property type="protein sequence ID" value="AAL62990"/>
    <property type="gene ID" value="PAE0735"/>
</dbReference>
<dbReference type="GeneID" id="1465217"/>
<dbReference type="KEGG" id="pai:PAE0735"/>
<dbReference type="PATRIC" id="fig|178306.9.peg.535"/>
<dbReference type="eggNOG" id="arCOG00470">
    <property type="taxonomic scope" value="Archaea"/>
</dbReference>
<dbReference type="HOGENOM" id="CLU_027255_1_1_2"/>
<dbReference type="InParanoid" id="Q8ZYK3"/>
<dbReference type="Proteomes" id="UP000002439">
    <property type="component" value="Chromosome"/>
</dbReference>
<dbReference type="GO" id="GO:0005524">
    <property type="term" value="F:ATP binding"/>
    <property type="evidence" value="ECO:0007669"/>
    <property type="project" value="UniProtKB-UniRule"/>
</dbReference>
<dbReference type="GO" id="GO:0016887">
    <property type="term" value="F:ATP hydrolysis activity"/>
    <property type="evidence" value="ECO:0007669"/>
    <property type="project" value="InterPro"/>
</dbReference>
<dbReference type="GO" id="GO:0003689">
    <property type="term" value="F:DNA clamp loader activity"/>
    <property type="evidence" value="ECO:0007669"/>
    <property type="project" value="UniProtKB-UniRule"/>
</dbReference>
<dbReference type="GO" id="GO:0006260">
    <property type="term" value="P:DNA replication"/>
    <property type="evidence" value="ECO:0007669"/>
    <property type="project" value="UniProtKB-UniRule"/>
</dbReference>
<dbReference type="CDD" id="cd00009">
    <property type="entry name" value="AAA"/>
    <property type="match status" value="1"/>
</dbReference>
<dbReference type="CDD" id="cd18140">
    <property type="entry name" value="HLD_clamp_RFC"/>
    <property type="match status" value="1"/>
</dbReference>
<dbReference type="Gene3D" id="1.10.8.60">
    <property type="match status" value="1"/>
</dbReference>
<dbReference type="Gene3D" id="3.40.50.300">
    <property type="entry name" value="P-loop containing nucleotide triphosphate hydrolases"/>
    <property type="match status" value="1"/>
</dbReference>
<dbReference type="HAMAP" id="MF_01508">
    <property type="entry name" value="RfcL"/>
    <property type="match status" value="1"/>
</dbReference>
<dbReference type="InterPro" id="IPR003593">
    <property type="entry name" value="AAA+_ATPase"/>
</dbReference>
<dbReference type="InterPro" id="IPR003959">
    <property type="entry name" value="ATPase_AAA_core"/>
</dbReference>
<dbReference type="InterPro" id="IPR027417">
    <property type="entry name" value="P-loop_NTPase"/>
</dbReference>
<dbReference type="InterPro" id="IPR023935">
    <property type="entry name" value="Rep_factor-C_lsu"/>
</dbReference>
<dbReference type="InterPro" id="IPR047854">
    <property type="entry name" value="RFC_lid"/>
</dbReference>
<dbReference type="NCBIfam" id="NF003229">
    <property type="entry name" value="PRK04195.1-5"/>
    <property type="match status" value="1"/>
</dbReference>
<dbReference type="PANTHER" id="PTHR23389">
    <property type="entry name" value="CHROMOSOME TRANSMISSION FIDELITY FACTOR 18"/>
    <property type="match status" value="1"/>
</dbReference>
<dbReference type="PANTHER" id="PTHR23389:SF6">
    <property type="entry name" value="REPLICATION FACTOR C SUBUNIT 1"/>
    <property type="match status" value="1"/>
</dbReference>
<dbReference type="Pfam" id="PF00004">
    <property type="entry name" value="AAA"/>
    <property type="match status" value="1"/>
</dbReference>
<dbReference type="Pfam" id="PF21960">
    <property type="entry name" value="RCF1-5-like_lid"/>
    <property type="match status" value="1"/>
</dbReference>
<dbReference type="SMART" id="SM00382">
    <property type="entry name" value="AAA"/>
    <property type="match status" value="1"/>
</dbReference>
<dbReference type="SUPFAM" id="SSF52540">
    <property type="entry name" value="P-loop containing nucleoside triphosphate hydrolases"/>
    <property type="match status" value="1"/>
</dbReference>
<protein>
    <recommendedName>
        <fullName evidence="1">Replication factor C large subunit</fullName>
        <shortName evidence="1">RFC large subunit</shortName>
    </recommendedName>
    <alternativeName>
        <fullName evidence="1">Clamp loader large subunit</fullName>
    </alternativeName>
</protein>
<accession>Q8ZYK3</accession>
<organism>
    <name type="scientific">Pyrobaculum aerophilum (strain ATCC 51768 / DSM 7523 / JCM 9630 / CIP 104966 / NBRC 100827 / IM2)</name>
    <dbReference type="NCBI Taxonomy" id="178306"/>
    <lineage>
        <taxon>Archaea</taxon>
        <taxon>Thermoproteota</taxon>
        <taxon>Thermoprotei</taxon>
        <taxon>Thermoproteales</taxon>
        <taxon>Thermoproteaceae</taxon>
        <taxon>Pyrobaculum</taxon>
    </lineage>
</organism>
<proteinExistence type="inferred from homology"/>
<name>RFCL_PYRAE</name>
<sequence length="422" mass="48133">MALPWIEKYRPKSFAEIVNQEEAKYTLASWICLKFRAPKEFCTRWAKKRDKEVAEAKAILLAGPPGVGKTTLVHALAREIRYELIELNASDVRTADRLRQVIGRGLRESSLFGFEGKMVLFDEVDGLHVKEDKGGLEEIIEIIETAKIPIIMTANNPYDPKFRPLRDISLVVNLKRLSEEEVVEVLRRICTSEGAKCEEEALRSIAKSSMGDLRAAINDLQMYLSGGRRILTLDDIKRVGERNPQLSMFEILDRVYKARWFDEARAVSFNPSFDWEQYFIWALESIPVVYKDLEIASTAYDRLSKADVFMGRIKRTQEWELLPYALELALGGVSQIKGKPRLPPFIKYGFPQRLLLLAKSKEARRRRDALVEYLAQNLHASKSVIKSEIIYVLSALSKNNQSIIEKLSKALGINAIDIKSVL</sequence>
<evidence type="ECO:0000255" key="1">
    <source>
        <dbReference type="HAMAP-Rule" id="MF_01508"/>
    </source>
</evidence>